<feature type="chain" id="PRO_1000126181" description="UPF0178 protein BceJ2315_16760">
    <location>
        <begin position="1"/>
        <end position="150"/>
    </location>
</feature>
<sequence>MQVLVDADACPAVIKDMLFRAARRAEICVTLVANQFLRTPPSPFIKAVQVPAGFDVADARIVELAEPGDLVITADIPLAAAVLDKGAHALDPRGNWFSRENIEERLSTRAMMDQLRSAGIDTGGPAPFSARDGKTFASQLDRFLARHGKP</sequence>
<accession>B4E9B2</accession>
<protein>
    <recommendedName>
        <fullName evidence="1">UPF0178 protein BceJ2315_16760</fullName>
    </recommendedName>
</protein>
<reference key="1">
    <citation type="journal article" date="2009" name="J. Bacteriol.">
        <title>The genome of Burkholderia cenocepacia J2315, an epidemic pathogen of cystic fibrosis patients.</title>
        <authorList>
            <person name="Holden M.T."/>
            <person name="Seth-Smith H.M."/>
            <person name="Crossman L.C."/>
            <person name="Sebaihia M."/>
            <person name="Bentley S.D."/>
            <person name="Cerdeno-Tarraga A.M."/>
            <person name="Thomson N.R."/>
            <person name="Bason N."/>
            <person name="Quail M.A."/>
            <person name="Sharp S."/>
            <person name="Cherevach I."/>
            <person name="Churcher C."/>
            <person name="Goodhead I."/>
            <person name="Hauser H."/>
            <person name="Holroyd N."/>
            <person name="Mungall K."/>
            <person name="Scott P."/>
            <person name="Walker D."/>
            <person name="White B."/>
            <person name="Rose H."/>
            <person name="Iversen P."/>
            <person name="Mil-Homens D."/>
            <person name="Rocha E.P."/>
            <person name="Fialho A.M."/>
            <person name="Baldwin A."/>
            <person name="Dowson C."/>
            <person name="Barrell B.G."/>
            <person name="Govan J.R."/>
            <person name="Vandamme P."/>
            <person name="Hart C.A."/>
            <person name="Mahenthiralingam E."/>
            <person name="Parkhill J."/>
        </authorList>
    </citation>
    <scope>NUCLEOTIDE SEQUENCE [LARGE SCALE GENOMIC DNA]</scope>
    <source>
        <strain>ATCC BAA-245 / DSM 16553 / LMG 16656 / NCTC 13227 / J2315 / CF5610</strain>
    </source>
</reference>
<gene>
    <name type="ordered locus">BceJ2315_16760</name>
    <name type="ORF">BCAL1714</name>
</gene>
<organism>
    <name type="scientific">Burkholderia cenocepacia (strain ATCC BAA-245 / DSM 16553 / LMG 16656 / NCTC 13227 / J2315 / CF5610)</name>
    <name type="common">Burkholderia cepacia (strain J2315)</name>
    <dbReference type="NCBI Taxonomy" id="216591"/>
    <lineage>
        <taxon>Bacteria</taxon>
        <taxon>Pseudomonadati</taxon>
        <taxon>Pseudomonadota</taxon>
        <taxon>Betaproteobacteria</taxon>
        <taxon>Burkholderiales</taxon>
        <taxon>Burkholderiaceae</taxon>
        <taxon>Burkholderia</taxon>
        <taxon>Burkholderia cepacia complex</taxon>
    </lineage>
</organism>
<proteinExistence type="inferred from homology"/>
<name>Y1676_BURCJ</name>
<comment type="similarity">
    <text evidence="1">Belongs to the UPF0178 family.</text>
</comment>
<dbReference type="EMBL" id="AM747720">
    <property type="protein sequence ID" value="CAR52012.1"/>
    <property type="molecule type" value="Genomic_DNA"/>
</dbReference>
<dbReference type="RefSeq" id="WP_006492939.1">
    <property type="nucleotide sequence ID" value="NC_011000.1"/>
</dbReference>
<dbReference type="KEGG" id="bcj:BCAL1714"/>
<dbReference type="eggNOG" id="COG1671">
    <property type="taxonomic scope" value="Bacteria"/>
</dbReference>
<dbReference type="HOGENOM" id="CLU_106619_2_1_4"/>
<dbReference type="BioCyc" id="BCEN216591:G1G1V-1897-MONOMER"/>
<dbReference type="Proteomes" id="UP000001035">
    <property type="component" value="Chromosome 1"/>
</dbReference>
<dbReference type="CDD" id="cd18720">
    <property type="entry name" value="PIN_YqxD-like"/>
    <property type="match status" value="1"/>
</dbReference>
<dbReference type="HAMAP" id="MF_00489">
    <property type="entry name" value="UPF0178"/>
    <property type="match status" value="1"/>
</dbReference>
<dbReference type="InterPro" id="IPR003791">
    <property type="entry name" value="UPF0178"/>
</dbReference>
<dbReference type="NCBIfam" id="NF001095">
    <property type="entry name" value="PRK00124.1"/>
    <property type="match status" value="1"/>
</dbReference>
<dbReference type="PANTHER" id="PTHR35146">
    <property type="entry name" value="UPF0178 PROTEIN YAII"/>
    <property type="match status" value="1"/>
</dbReference>
<dbReference type="PANTHER" id="PTHR35146:SF1">
    <property type="entry name" value="UPF0178 PROTEIN YAII"/>
    <property type="match status" value="1"/>
</dbReference>
<dbReference type="Pfam" id="PF02639">
    <property type="entry name" value="DUF188"/>
    <property type="match status" value="1"/>
</dbReference>
<evidence type="ECO:0000255" key="1">
    <source>
        <dbReference type="HAMAP-Rule" id="MF_00489"/>
    </source>
</evidence>